<organism>
    <name type="scientific">Neisseria meningitidis serogroup B (strain ATCC BAA-335 / MC58)</name>
    <dbReference type="NCBI Taxonomy" id="122586"/>
    <lineage>
        <taxon>Bacteria</taxon>
        <taxon>Pseudomonadati</taxon>
        <taxon>Pseudomonadota</taxon>
        <taxon>Betaproteobacteria</taxon>
        <taxon>Neisseriales</taxon>
        <taxon>Neisseriaceae</taxon>
        <taxon>Neisseria</taxon>
    </lineage>
</organism>
<dbReference type="EC" id="3.1.-.-" evidence="1"/>
<dbReference type="EMBL" id="AE002098">
    <property type="protein sequence ID" value="AAF40967.1"/>
    <property type="molecule type" value="Genomic_DNA"/>
</dbReference>
<dbReference type="PIR" id="A81188">
    <property type="entry name" value="A81188"/>
</dbReference>
<dbReference type="RefSeq" id="NP_273583.1">
    <property type="nucleotide sequence ID" value="NC_003112.2"/>
</dbReference>
<dbReference type="RefSeq" id="WP_002225585.1">
    <property type="nucleotide sequence ID" value="NC_003112.2"/>
</dbReference>
<dbReference type="SMR" id="Q9K0P7"/>
<dbReference type="FunCoup" id="Q9K0P7">
    <property type="interactions" value="227"/>
</dbReference>
<dbReference type="STRING" id="122586.NMB0538"/>
<dbReference type="PaxDb" id="122586-NMB0538"/>
<dbReference type="KEGG" id="nme:NMB0538"/>
<dbReference type="PATRIC" id="fig|122586.8.peg.685"/>
<dbReference type="HOGENOM" id="CLU_106710_0_1_4"/>
<dbReference type="InParanoid" id="Q9K0P7"/>
<dbReference type="OrthoDB" id="9807740at2"/>
<dbReference type="Proteomes" id="UP000000425">
    <property type="component" value="Chromosome"/>
</dbReference>
<dbReference type="GO" id="GO:0005737">
    <property type="term" value="C:cytoplasm"/>
    <property type="evidence" value="ECO:0007669"/>
    <property type="project" value="UniProtKB-SubCell"/>
</dbReference>
<dbReference type="GO" id="GO:0004222">
    <property type="term" value="F:metalloendopeptidase activity"/>
    <property type="evidence" value="ECO:0007669"/>
    <property type="project" value="InterPro"/>
</dbReference>
<dbReference type="GO" id="GO:0004521">
    <property type="term" value="F:RNA endonuclease activity"/>
    <property type="evidence" value="ECO:0007669"/>
    <property type="project" value="UniProtKB-UniRule"/>
</dbReference>
<dbReference type="GO" id="GO:0008270">
    <property type="term" value="F:zinc ion binding"/>
    <property type="evidence" value="ECO:0007669"/>
    <property type="project" value="UniProtKB-UniRule"/>
</dbReference>
<dbReference type="GO" id="GO:0006364">
    <property type="term" value="P:rRNA processing"/>
    <property type="evidence" value="ECO:0007669"/>
    <property type="project" value="UniProtKB-UniRule"/>
</dbReference>
<dbReference type="Gene3D" id="3.40.390.30">
    <property type="entry name" value="Metalloproteases ('zincins'), catalytic domain"/>
    <property type="match status" value="1"/>
</dbReference>
<dbReference type="HAMAP" id="MF_00009">
    <property type="entry name" value="Endoribonucl_YbeY"/>
    <property type="match status" value="1"/>
</dbReference>
<dbReference type="InterPro" id="IPR023091">
    <property type="entry name" value="MetalPrtase_cat_dom_sf_prd"/>
</dbReference>
<dbReference type="InterPro" id="IPR002036">
    <property type="entry name" value="YbeY"/>
</dbReference>
<dbReference type="InterPro" id="IPR020549">
    <property type="entry name" value="YbeY_CS"/>
</dbReference>
<dbReference type="NCBIfam" id="TIGR00043">
    <property type="entry name" value="rRNA maturation RNase YbeY"/>
    <property type="match status" value="1"/>
</dbReference>
<dbReference type="PANTHER" id="PTHR46986">
    <property type="entry name" value="ENDORIBONUCLEASE YBEY, CHLOROPLASTIC"/>
    <property type="match status" value="1"/>
</dbReference>
<dbReference type="PANTHER" id="PTHR46986:SF1">
    <property type="entry name" value="ENDORIBONUCLEASE YBEY, CHLOROPLASTIC"/>
    <property type="match status" value="1"/>
</dbReference>
<dbReference type="Pfam" id="PF02130">
    <property type="entry name" value="YbeY"/>
    <property type="match status" value="1"/>
</dbReference>
<dbReference type="SUPFAM" id="SSF55486">
    <property type="entry name" value="Metalloproteases ('zincins'), catalytic domain"/>
    <property type="match status" value="1"/>
</dbReference>
<dbReference type="PROSITE" id="PS01306">
    <property type="entry name" value="UPF0054"/>
    <property type="match status" value="1"/>
</dbReference>
<gene>
    <name evidence="1" type="primary">ybeY</name>
    <name type="ordered locus">NMB0538</name>
</gene>
<accession>Q9K0P7</accession>
<protein>
    <recommendedName>
        <fullName evidence="1">Endoribonuclease YbeY</fullName>
        <ecNumber evidence="1">3.1.-.-</ecNumber>
    </recommendedName>
</protein>
<keyword id="KW-0963">Cytoplasm</keyword>
<keyword id="KW-0255">Endonuclease</keyword>
<keyword id="KW-0378">Hydrolase</keyword>
<keyword id="KW-0479">Metal-binding</keyword>
<keyword id="KW-0540">Nuclease</keyword>
<keyword id="KW-1185">Reference proteome</keyword>
<keyword id="KW-0690">Ribosome biogenesis</keyword>
<keyword id="KW-0698">rRNA processing</keyword>
<keyword id="KW-0862">Zinc</keyword>
<name>YBEY_NEIMB</name>
<evidence type="ECO:0000255" key="1">
    <source>
        <dbReference type="HAMAP-Rule" id="MF_00009"/>
    </source>
</evidence>
<proteinExistence type="inferred from homology"/>
<reference key="1">
    <citation type="journal article" date="2000" name="Science">
        <title>Complete genome sequence of Neisseria meningitidis serogroup B strain MC58.</title>
        <authorList>
            <person name="Tettelin H."/>
            <person name="Saunders N.J."/>
            <person name="Heidelberg J.F."/>
            <person name="Jeffries A.C."/>
            <person name="Nelson K.E."/>
            <person name="Eisen J.A."/>
            <person name="Ketchum K.A."/>
            <person name="Hood D.W."/>
            <person name="Peden J.F."/>
            <person name="Dodson R.J."/>
            <person name="Nelson W.C."/>
            <person name="Gwinn M.L."/>
            <person name="DeBoy R.T."/>
            <person name="Peterson J.D."/>
            <person name="Hickey E.K."/>
            <person name="Haft D.H."/>
            <person name="Salzberg S.L."/>
            <person name="White O."/>
            <person name="Fleischmann R.D."/>
            <person name="Dougherty B.A."/>
            <person name="Mason T.M."/>
            <person name="Ciecko A."/>
            <person name="Parksey D.S."/>
            <person name="Blair E."/>
            <person name="Cittone H."/>
            <person name="Clark E.B."/>
            <person name="Cotton M.D."/>
            <person name="Utterback T.R."/>
            <person name="Khouri H.M."/>
            <person name="Qin H."/>
            <person name="Vamathevan J.J."/>
            <person name="Gill J."/>
            <person name="Scarlato V."/>
            <person name="Masignani V."/>
            <person name="Pizza M."/>
            <person name="Grandi G."/>
            <person name="Sun L."/>
            <person name="Smith H.O."/>
            <person name="Fraser C.M."/>
            <person name="Moxon E.R."/>
            <person name="Rappuoli R."/>
            <person name="Venter J.C."/>
        </authorList>
    </citation>
    <scope>NUCLEOTIDE SEQUENCE [LARGE SCALE GENOMIC DNA]</scope>
    <source>
        <strain>ATCC BAA-335 / MC58</strain>
    </source>
</reference>
<feature type="chain" id="PRO_0000102496" description="Endoribonuclease YbeY">
    <location>
        <begin position="1"/>
        <end position="169"/>
    </location>
</feature>
<feature type="binding site" evidence="1">
    <location>
        <position position="130"/>
    </location>
    <ligand>
        <name>Zn(2+)</name>
        <dbReference type="ChEBI" id="CHEBI:29105"/>
        <note>catalytic</note>
    </ligand>
</feature>
<feature type="binding site" evidence="1">
    <location>
        <position position="134"/>
    </location>
    <ligand>
        <name>Zn(2+)</name>
        <dbReference type="ChEBI" id="CHEBI:29105"/>
        <note>catalytic</note>
    </ligand>
</feature>
<feature type="binding site" evidence="1">
    <location>
        <position position="140"/>
    </location>
    <ligand>
        <name>Zn(2+)</name>
        <dbReference type="ChEBI" id="CHEBI:29105"/>
        <note>catalytic</note>
    </ligand>
</feature>
<comment type="function">
    <text evidence="1">Single strand-specific metallo-endoribonuclease involved in late-stage 70S ribosome quality control and in maturation of the 3' terminus of the 16S rRNA.</text>
</comment>
<comment type="cofactor">
    <cofactor evidence="1">
        <name>Zn(2+)</name>
        <dbReference type="ChEBI" id="CHEBI:29105"/>
    </cofactor>
    <text evidence="1">Binds 1 zinc ion.</text>
</comment>
<comment type="subcellular location">
    <subcellularLocation>
        <location evidence="1">Cytoplasm</location>
    </subcellularLocation>
</comment>
<comment type="similarity">
    <text evidence="1">Belongs to the endoribonuclease YbeY family.</text>
</comment>
<sequence length="169" mass="19639">MKRTKKYPFLTLQRQRFHLNFENASSAAGIPAERDFYRWAWSALKNEYRRADISLILLDEEEARAYNRDYRGKDYATNVLSFALNEGEILPCQVSEKLYGDLIICPQVVLKEAAEQGKTPEQHFAHLTIHGTLHLMGYDHIEDDEAEIMEAEEIRLMRAAGFPNPYQED</sequence>